<proteinExistence type="evidence at transcript level"/>
<feature type="chain" id="PRO_0000349184" description="INSYN2B protein">
    <location>
        <begin position="1"/>
        <end position="535"/>
    </location>
</feature>
<feature type="region of interest" description="Disordered" evidence="2">
    <location>
        <begin position="23"/>
        <end position="85"/>
    </location>
</feature>
<feature type="region of interest" description="Disordered" evidence="2">
    <location>
        <begin position="215"/>
        <end position="346"/>
    </location>
</feature>
<feature type="region of interest" description="Disordered" evidence="2">
    <location>
        <begin position="360"/>
        <end position="387"/>
    </location>
</feature>
<feature type="region of interest" description="Disordered" evidence="2">
    <location>
        <begin position="493"/>
        <end position="528"/>
    </location>
</feature>
<feature type="coiled-coil region" evidence="1">
    <location>
        <begin position="411"/>
        <end position="448"/>
    </location>
</feature>
<feature type="compositionally biased region" description="Polar residues" evidence="2">
    <location>
        <begin position="46"/>
        <end position="59"/>
    </location>
</feature>
<feature type="compositionally biased region" description="Low complexity" evidence="2">
    <location>
        <begin position="219"/>
        <end position="232"/>
    </location>
</feature>
<feature type="compositionally biased region" description="Polar residues" evidence="2">
    <location>
        <begin position="258"/>
        <end position="269"/>
    </location>
</feature>
<feature type="compositionally biased region" description="Polar residues" evidence="2">
    <location>
        <begin position="307"/>
        <end position="319"/>
    </location>
</feature>
<feature type="compositionally biased region" description="Polar residues" evidence="2">
    <location>
        <begin position="361"/>
        <end position="375"/>
    </location>
</feature>
<name>INY2B_MOUSE</name>
<protein>
    <recommendedName>
        <fullName evidence="3">INSYN2B protein</fullName>
    </recommendedName>
    <alternativeName>
        <fullName evidence="3">Inhibitory synaptic factor family member 2B</fullName>
    </alternativeName>
</protein>
<evidence type="ECO:0000255" key="1"/>
<evidence type="ECO:0000256" key="2">
    <source>
        <dbReference type="SAM" id="MobiDB-lite"/>
    </source>
</evidence>
<evidence type="ECO:0000305" key="3"/>
<accession>Q6GQV1</accession>
<dbReference type="EMBL" id="BC072605">
    <property type="protein sequence ID" value="AAH72605.1"/>
    <property type="molecule type" value="mRNA"/>
</dbReference>
<dbReference type="CCDS" id="CCDS36127.1"/>
<dbReference type="RefSeq" id="NP_001020553.1">
    <property type="nucleotide sequence ID" value="NM_001025382.3"/>
</dbReference>
<dbReference type="RefSeq" id="XP_006514826.1">
    <property type="nucleotide sequence ID" value="XM_006514763.5"/>
</dbReference>
<dbReference type="SMR" id="Q6GQV1"/>
<dbReference type="STRING" id="10090.ENSMUSP00000129183"/>
<dbReference type="iPTMnet" id="Q6GQV1"/>
<dbReference type="PhosphoSitePlus" id="Q6GQV1"/>
<dbReference type="PaxDb" id="10090-ENSMUSP00000129183"/>
<dbReference type="ProteomicsDB" id="271531"/>
<dbReference type="Antibodypedia" id="64201">
    <property type="antibodies" value="6 antibodies from 6 providers"/>
</dbReference>
<dbReference type="Ensembl" id="ENSMUST00000165963.9">
    <property type="protein sequence ID" value="ENSMUSP00000129183.2"/>
    <property type="gene ID" value="ENSMUSG00000069911.13"/>
</dbReference>
<dbReference type="GeneID" id="574403"/>
<dbReference type="KEGG" id="mmu:574403"/>
<dbReference type="UCSC" id="uc011xsz.1">
    <property type="organism name" value="mouse"/>
</dbReference>
<dbReference type="AGR" id="MGI:3643491"/>
<dbReference type="CTD" id="100131897"/>
<dbReference type="MGI" id="MGI:3643491">
    <property type="gene designation" value="Insyn2b"/>
</dbReference>
<dbReference type="VEuPathDB" id="HostDB:ENSMUSG00000069911"/>
<dbReference type="eggNOG" id="ENOG502QT66">
    <property type="taxonomic scope" value="Eukaryota"/>
</dbReference>
<dbReference type="GeneTree" id="ENSGT00530000063787"/>
<dbReference type="HOGENOM" id="CLU_543970_0_0_1"/>
<dbReference type="InParanoid" id="Q6GQV1"/>
<dbReference type="OMA" id="TQVPEYI"/>
<dbReference type="OrthoDB" id="8679980at2759"/>
<dbReference type="PhylomeDB" id="Q6GQV1"/>
<dbReference type="TreeFam" id="TF333465"/>
<dbReference type="BioGRID-ORCS" id="574403">
    <property type="hits" value="2 hits in 75 CRISPR screens"/>
</dbReference>
<dbReference type="PRO" id="PR:Q6GQV1"/>
<dbReference type="Proteomes" id="UP000000589">
    <property type="component" value="Chromosome 11"/>
</dbReference>
<dbReference type="RNAct" id="Q6GQV1">
    <property type="molecule type" value="protein"/>
</dbReference>
<dbReference type="Bgee" id="ENSMUSG00000069911">
    <property type="expression patterns" value="Expressed in subparaventricular zone and 103 other cell types or tissues"/>
</dbReference>
<dbReference type="InterPro" id="IPR029337">
    <property type="entry name" value="INSYN2"/>
</dbReference>
<dbReference type="PANTHER" id="PTHR28682">
    <property type="entry name" value="INHIBITORY SYNAPTIC FACTOR 2A-RELATED"/>
    <property type="match status" value="1"/>
</dbReference>
<dbReference type="PANTHER" id="PTHR28682:SF2">
    <property type="entry name" value="PROTEIN INSYN2B"/>
    <property type="match status" value="1"/>
</dbReference>
<dbReference type="Pfam" id="PF15265">
    <property type="entry name" value="FAM196"/>
    <property type="match status" value="1"/>
</dbReference>
<organism>
    <name type="scientific">Mus musculus</name>
    <name type="common">Mouse</name>
    <dbReference type="NCBI Taxonomy" id="10090"/>
    <lineage>
        <taxon>Eukaryota</taxon>
        <taxon>Metazoa</taxon>
        <taxon>Chordata</taxon>
        <taxon>Craniata</taxon>
        <taxon>Vertebrata</taxon>
        <taxon>Euteleostomi</taxon>
        <taxon>Mammalia</taxon>
        <taxon>Eutheria</taxon>
        <taxon>Euarchontoglires</taxon>
        <taxon>Glires</taxon>
        <taxon>Rodentia</taxon>
        <taxon>Myomorpha</taxon>
        <taxon>Muroidea</taxon>
        <taxon>Muridae</taxon>
        <taxon>Murinae</taxon>
        <taxon>Mus</taxon>
        <taxon>Mus</taxon>
    </lineage>
</organism>
<comment type="similarity">
    <text evidence="3">Belongs to the INSYN2 family.</text>
</comment>
<reference key="1">
    <citation type="journal article" date="2004" name="Genome Res.">
        <title>The status, quality, and expansion of the NIH full-length cDNA project: the Mammalian Gene Collection (MGC).</title>
        <authorList>
            <consortium name="The MGC Project Team"/>
        </authorList>
    </citation>
    <scope>NUCLEOTIDE SEQUENCE [LARGE SCALE MRNA]</scope>
    <source>
        <strain>C57BL/6J</strain>
        <tissue>Brain</tissue>
    </source>
</reference>
<gene>
    <name type="primary">Insyn2b</name>
    <name type="synonym">Fam196b</name>
</gene>
<sequence length="535" mass="59102">MAQQSMKVRPVLLKRSSLESVELVKQPHHRRSKSQQVRFKEDGNIKNPTGVTEVNTQTPEDPGVMGKAQASRHHHPTTYSLSFPRSHKAGGFRSISIQTSPSLRKHFPVFKRKKLTTSKSLVEMPTASPSAIQVNGNLSEQDIVSSDLAFLRLAQHLEDGPRRLKIPHPFLPRMPKVQSNGPVSFCLESGTWMSSEKATAAIQVPDDICHSPTWEARESALSPESSAEESNSIPALISMCPGDGQRVMTSELERMPPCSNTNSSASNMPGTEKLTPELLLPKDNPDDKDLGLPSSQSKKMCVPSPPRTHSSPEPGSRSQPVHLGRSSDCPASGDNHQDLESLRSSSASKSVPVCWEHVTKLPSQSDTPELQTGVGSEQLPASIPRQENRAQSSREIGGSNHSHLAQGELCDLQGRLQSVEESLHSNQEKIKVLLNVIQDLEKAHALTEGRNFYRTGQDLNNCSTCQNTACIIYSVEYDFRQQEGRFHEVLQSLEEAEPTEEAPSPPKSPAEAPVPEKQDLRRKSKKVKKKCFWWI</sequence>
<keyword id="KW-0175">Coiled coil</keyword>
<keyword id="KW-1185">Reference proteome</keyword>